<dbReference type="EC" id="1.1.1.79" evidence="1 2"/>
<dbReference type="EC" id="1.1.1.81" evidence="1 2"/>
<dbReference type="EMBL" id="AF134895">
    <property type="protein sequence ID" value="AAF00111.1"/>
    <property type="molecule type" value="mRNA"/>
</dbReference>
<dbReference type="EMBL" id="AF146018">
    <property type="protein sequence ID" value="AAD45886.1"/>
    <property type="molecule type" value="mRNA"/>
</dbReference>
<dbReference type="EMBL" id="AF146689">
    <property type="protein sequence ID" value="AAD46517.1"/>
    <property type="molecule type" value="Genomic_DNA"/>
</dbReference>
<dbReference type="EMBL" id="AF113215">
    <property type="protein sequence ID" value="AAG39286.1"/>
    <property type="status" value="ALT_FRAME"/>
    <property type="molecule type" value="mRNA"/>
</dbReference>
<dbReference type="EMBL" id="AK026287">
    <property type="protein sequence ID" value="BAB15430.1"/>
    <property type="molecule type" value="mRNA"/>
</dbReference>
<dbReference type="EMBL" id="AK315690">
    <property type="protein sequence ID" value="BAG38053.1"/>
    <property type="molecule type" value="mRNA"/>
</dbReference>
<dbReference type="EMBL" id="AL158155">
    <property type="status" value="NOT_ANNOTATED_CDS"/>
    <property type="molecule type" value="Genomic_DNA"/>
</dbReference>
<dbReference type="EMBL" id="CH471071">
    <property type="protein sequence ID" value="EAW58284.1"/>
    <property type="molecule type" value="Genomic_DNA"/>
</dbReference>
<dbReference type="EMBL" id="CH471071">
    <property type="protein sequence ID" value="EAW58285.1"/>
    <property type="molecule type" value="Genomic_DNA"/>
</dbReference>
<dbReference type="EMBL" id="BC000605">
    <property type="protein sequence ID" value="AAH00605.1"/>
    <property type="molecule type" value="mRNA"/>
</dbReference>
<dbReference type="EMBL" id="AF113251">
    <property type="protein sequence ID" value="AAD54066.1"/>
    <property type="status" value="ALT_FRAME"/>
    <property type="molecule type" value="mRNA"/>
</dbReference>
<dbReference type="CCDS" id="CCDS6609.1">
    <molecule id="Q9UBQ7-1"/>
</dbReference>
<dbReference type="PIR" id="JC7190">
    <property type="entry name" value="JC7190"/>
</dbReference>
<dbReference type="RefSeq" id="NP_036335.1">
    <molecule id="Q9UBQ7-1"/>
    <property type="nucleotide sequence ID" value="NM_012203.2"/>
</dbReference>
<dbReference type="PDB" id="2GCG">
    <property type="method" value="X-ray"/>
    <property type="resolution" value="2.20 A"/>
    <property type="chains" value="A/B/C/D=1-328"/>
</dbReference>
<dbReference type="PDB" id="2H1S">
    <property type="method" value="X-ray"/>
    <property type="resolution" value="2.45 A"/>
    <property type="chains" value="A/B/C/D=2-328"/>
</dbReference>
<dbReference type="PDB" id="2Q50">
    <property type="method" value="X-ray"/>
    <property type="resolution" value="2.45 A"/>
    <property type="chains" value="A/B/C/D=2-328"/>
</dbReference>
<dbReference type="PDB" id="2WWR">
    <property type="method" value="X-ray"/>
    <property type="resolution" value="2.82 A"/>
    <property type="chains" value="A/B/C/D=1-328"/>
</dbReference>
<dbReference type="PDBsum" id="2GCG"/>
<dbReference type="PDBsum" id="2H1S"/>
<dbReference type="PDBsum" id="2Q50"/>
<dbReference type="PDBsum" id="2WWR"/>
<dbReference type="SMR" id="Q9UBQ7"/>
<dbReference type="BioGRID" id="114781">
    <property type="interactions" value="102"/>
</dbReference>
<dbReference type="FunCoup" id="Q9UBQ7">
    <property type="interactions" value="843"/>
</dbReference>
<dbReference type="IntAct" id="Q9UBQ7">
    <property type="interactions" value="19"/>
</dbReference>
<dbReference type="MINT" id="Q9UBQ7"/>
<dbReference type="STRING" id="9606.ENSP00000313432"/>
<dbReference type="ChEMBL" id="CHEMBL4295972"/>
<dbReference type="GlyGen" id="Q9UBQ7">
    <property type="glycosylation" value="1 site, 1 O-linked glycan (1 site)"/>
</dbReference>
<dbReference type="iPTMnet" id="Q9UBQ7"/>
<dbReference type="MetOSite" id="Q9UBQ7"/>
<dbReference type="PhosphoSitePlus" id="Q9UBQ7"/>
<dbReference type="SwissPalm" id="Q9UBQ7"/>
<dbReference type="BioMuta" id="GRHPR"/>
<dbReference type="DMDM" id="47116943"/>
<dbReference type="REPRODUCTION-2DPAGE" id="IPI00037448"/>
<dbReference type="jPOST" id="Q9UBQ7"/>
<dbReference type="MassIVE" id="Q9UBQ7"/>
<dbReference type="PaxDb" id="9606-ENSP00000313432"/>
<dbReference type="PeptideAtlas" id="Q9UBQ7"/>
<dbReference type="ProteomicsDB" id="80956"/>
<dbReference type="ProteomicsDB" id="84034">
    <molecule id="Q9UBQ7-1"/>
</dbReference>
<dbReference type="Pumba" id="Q9UBQ7"/>
<dbReference type="Antibodypedia" id="11982">
    <property type="antibodies" value="327 antibodies from 27 providers"/>
</dbReference>
<dbReference type="DNASU" id="9380"/>
<dbReference type="Ensembl" id="ENST00000318158.11">
    <molecule id="Q9UBQ7-1"/>
    <property type="protein sequence ID" value="ENSP00000313432.6"/>
    <property type="gene ID" value="ENSG00000137106.18"/>
</dbReference>
<dbReference type="Ensembl" id="ENST00000494290.1">
    <molecule id="Q9UBQ7-2"/>
    <property type="protein sequence ID" value="ENSP00000432021.1"/>
    <property type="gene ID" value="ENSG00000137106.18"/>
</dbReference>
<dbReference type="GeneID" id="9380"/>
<dbReference type="KEGG" id="hsa:9380"/>
<dbReference type="MANE-Select" id="ENST00000318158.11">
    <property type="protein sequence ID" value="ENSP00000313432.6"/>
    <property type="RefSeq nucleotide sequence ID" value="NM_012203.2"/>
    <property type="RefSeq protein sequence ID" value="NP_036335.1"/>
</dbReference>
<dbReference type="UCSC" id="uc003zzu.2">
    <molecule id="Q9UBQ7-1"/>
    <property type="organism name" value="human"/>
</dbReference>
<dbReference type="AGR" id="HGNC:4570"/>
<dbReference type="CTD" id="9380"/>
<dbReference type="DisGeNET" id="9380"/>
<dbReference type="GeneCards" id="GRHPR"/>
<dbReference type="GeneReviews" id="GRHPR"/>
<dbReference type="HGNC" id="HGNC:4570">
    <property type="gene designation" value="GRHPR"/>
</dbReference>
<dbReference type="HPA" id="ENSG00000137106">
    <property type="expression patterns" value="Tissue enhanced (liver)"/>
</dbReference>
<dbReference type="MalaCards" id="GRHPR"/>
<dbReference type="MIM" id="260000">
    <property type="type" value="phenotype"/>
</dbReference>
<dbReference type="MIM" id="604296">
    <property type="type" value="gene"/>
</dbReference>
<dbReference type="neXtProt" id="NX_Q9UBQ7"/>
<dbReference type="OpenTargets" id="ENSG00000137106"/>
<dbReference type="Orphanet" id="93599">
    <property type="disease" value="Primary hyperoxaluria type 2"/>
</dbReference>
<dbReference type="PharmGKB" id="PA28965"/>
<dbReference type="VEuPathDB" id="HostDB:ENSG00000137106"/>
<dbReference type="eggNOG" id="KOG0069">
    <property type="taxonomic scope" value="Eukaryota"/>
</dbReference>
<dbReference type="GeneTree" id="ENSGT00940000158578"/>
<dbReference type="HOGENOM" id="CLU_019796_1_2_1"/>
<dbReference type="InParanoid" id="Q9UBQ7"/>
<dbReference type="OMA" id="PHIAWAY"/>
<dbReference type="OrthoDB" id="298012at2759"/>
<dbReference type="PAN-GO" id="Q9UBQ7">
    <property type="GO annotations" value="4 GO annotations based on evolutionary models"/>
</dbReference>
<dbReference type="PhylomeDB" id="Q9UBQ7"/>
<dbReference type="TreeFam" id="TF324791"/>
<dbReference type="BioCyc" id="MetaCyc:HS06275-MONOMER"/>
<dbReference type="BRENDA" id="1.1.1.26">
    <property type="organism ID" value="2681"/>
</dbReference>
<dbReference type="BRENDA" id="1.1.1.79">
    <property type="organism ID" value="2681"/>
</dbReference>
<dbReference type="BRENDA" id="1.1.1.81">
    <property type="organism ID" value="2681"/>
</dbReference>
<dbReference type="PathwayCommons" id="Q9UBQ7"/>
<dbReference type="Reactome" id="R-HSA-389661">
    <property type="pathway name" value="Glyoxylate metabolism and glycine degradation"/>
</dbReference>
<dbReference type="SABIO-RK" id="Q9UBQ7"/>
<dbReference type="SignaLink" id="Q9UBQ7"/>
<dbReference type="BioGRID-ORCS" id="9380">
    <property type="hits" value="18 hits in 1157 CRISPR screens"/>
</dbReference>
<dbReference type="ChiTaRS" id="GRHPR">
    <property type="organism name" value="human"/>
</dbReference>
<dbReference type="EvolutionaryTrace" id="Q9UBQ7"/>
<dbReference type="GeneWiki" id="GRHPR"/>
<dbReference type="GenomeRNAi" id="9380"/>
<dbReference type="Pharos" id="Q9UBQ7">
    <property type="development level" value="Tbio"/>
</dbReference>
<dbReference type="PRO" id="PR:Q9UBQ7"/>
<dbReference type="Proteomes" id="UP000005640">
    <property type="component" value="Chromosome 9"/>
</dbReference>
<dbReference type="RNAct" id="Q9UBQ7">
    <property type="molecule type" value="protein"/>
</dbReference>
<dbReference type="Bgee" id="ENSG00000137106">
    <property type="expression patterns" value="Expressed in right lobe of liver and 212 other cell types or tissues"/>
</dbReference>
<dbReference type="ExpressionAtlas" id="Q9UBQ7">
    <property type="expression patterns" value="baseline and differential"/>
</dbReference>
<dbReference type="GO" id="GO:1902494">
    <property type="term" value="C:catalytic complex"/>
    <property type="evidence" value="ECO:0000314"/>
    <property type="project" value="UniProtKB"/>
</dbReference>
<dbReference type="GO" id="GO:0005737">
    <property type="term" value="C:cytoplasm"/>
    <property type="evidence" value="ECO:0000314"/>
    <property type="project" value="LIFEdb"/>
</dbReference>
<dbReference type="GO" id="GO:0005829">
    <property type="term" value="C:cytosol"/>
    <property type="evidence" value="ECO:0000318"/>
    <property type="project" value="GO_Central"/>
</dbReference>
<dbReference type="GO" id="GO:0070062">
    <property type="term" value="C:extracellular exosome"/>
    <property type="evidence" value="ECO:0007005"/>
    <property type="project" value="UniProtKB"/>
</dbReference>
<dbReference type="GO" id="GO:0005739">
    <property type="term" value="C:mitochondrion"/>
    <property type="evidence" value="ECO:0006056"/>
    <property type="project" value="FlyBase"/>
</dbReference>
<dbReference type="GO" id="GO:0005782">
    <property type="term" value="C:peroxisomal matrix"/>
    <property type="evidence" value="ECO:0000304"/>
    <property type="project" value="Reactome"/>
</dbReference>
<dbReference type="GO" id="GO:0031406">
    <property type="term" value="F:carboxylic acid binding"/>
    <property type="evidence" value="ECO:0007669"/>
    <property type="project" value="Ensembl"/>
</dbReference>
<dbReference type="GO" id="GO:0030267">
    <property type="term" value="F:glyoxylate reductase (NADPH) activity"/>
    <property type="evidence" value="ECO:0000314"/>
    <property type="project" value="UniProtKB"/>
</dbReference>
<dbReference type="GO" id="GO:0008465">
    <property type="term" value="F:hydroxypyruvate reductase (NADH) activity"/>
    <property type="evidence" value="ECO:0000314"/>
    <property type="project" value="UniProtKB"/>
</dbReference>
<dbReference type="GO" id="GO:0120509">
    <property type="term" value="F:hydroxypyruvate reductase (NADPH) activity"/>
    <property type="evidence" value="ECO:0007669"/>
    <property type="project" value="RHEA"/>
</dbReference>
<dbReference type="GO" id="GO:0016618">
    <property type="term" value="F:hydroxypyruvate reductase [NAD(P)H] activity"/>
    <property type="evidence" value="ECO:0000314"/>
    <property type="project" value="UniProtKB"/>
</dbReference>
<dbReference type="GO" id="GO:0051287">
    <property type="term" value="F:NAD binding"/>
    <property type="evidence" value="ECO:0007669"/>
    <property type="project" value="Ensembl"/>
</dbReference>
<dbReference type="GO" id="GO:0070402">
    <property type="term" value="F:NADPH binding"/>
    <property type="evidence" value="ECO:0000314"/>
    <property type="project" value="UniProtKB"/>
</dbReference>
<dbReference type="GO" id="GO:0042803">
    <property type="term" value="F:protein homodimerization activity"/>
    <property type="evidence" value="ECO:0000314"/>
    <property type="project" value="UniProtKB"/>
</dbReference>
<dbReference type="GO" id="GO:0019752">
    <property type="term" value="P:carboxylic acid metabolic process"/>
    <property type="evidence" value="ECO:0000304"/>
    <property type="project" value="Reactome"/>
</dbReference>
<dbReference type="GO" id="GO:0043648">
    <property type="term" value="P:dicarboxylic acid metabolic process"/>
    <property type="evidence" value="ECO:0007669"/>
    <property type="project" value="Ensembl"/>
</dbReference>
<dbReference type="GO" id="GO:0046487">
    <property type="term" value="P:glyoxylate metabolic process"/>
    <property type="evidence" value="ECO:0000314"/>
    <property type="project" value="UniProtKB"/>
</dbReference>
<dbReference type="CDD" id="cd05301">
    <property type="entry name" value="GDH"/>
    <property type="match status" value="1"/>
</dbReference>
<dbReference type="FunFam" id="3.40.50.720:FF:000026">
    <property type="entry name" value="Glyoxylate/hydroxypyruvate reductase B"/>
    <property type="match status" value="1"/>
</dbReference>
<dbReference type="Gene3D" id="3.40.50.720">
    <property type="entry name" value="NAD(P)-binding Rossmann-like Domain"/>
    <property type="match status" value="2"/>
</dbReference>
<dbReference type="InterPro" id="IPR050223">
    <property type="entry name" value="D-isomer_2-hydroxyacid_DH"/>
</dbReference>
<dbReference type="InterPro" id="IPR006139">
    <property type="entry name" value="D-isomer_2_OHA_DH_cat_dom"/>
</dbReference>
<dbReference type="InterPro" id="IPR029753">
    <property type="entry name" value="D-isomer_DH_CS"/>
</dbReference>
<dbReference type="InterPro" id="IPR006140">
    <property type="entry name" value="D-isomer_DH_NAD-bd"/>
</dbReference>
<dbReference type="InterPro" id="IPR036291">
    <property type="entry name" value="NAD(P)-bd_dom_sf"/>
</dbReference>
<dbReference type="PANTHER" id="PTHR10996">
    <property type="entry name" value="2-HYDROXYACID DEHYDROGENASE-RELATED"/>
    <property type="match status" value="1"/>
</dbReference>
<dbReference type="PANTHER" id="PTHR10996:SF137">
    <property type="entry name" value="GLYOXYLATE REDUCTASE_HYDROXYPYRUVATE REDUCTASE"/>
    <property type="match status" value="1"/>
</dbReference>
<dbReference type="Pfam" id="PF00389">
    <property type="entry name" value="2-Hacid_dh"/>
    <property type="match status" value="1"/>
</dbReference>
<dbReference type="Pfam" id="PF02826">
    <property type="entry name" value="2-Hacid_dh_C"/>
    <property type="match status" value="1"/>
</dbReference>
<dbReference type="SUPFAM" id="SSF52283">
    <property type="entry name" value="Formate/glycerate dehydrogenase catalytic domain-like"/>
    <property type="match status" value="1"/>
</dbReference>
<dbReference type="SUPFAM" id="SSF51735">
    <property type="entry name" value="NAD(P)-binding Rossmann-fold domains"/>
    <property type="match status" value="1"/>
</dbReference>
<dbReference type="PROSITE" id="PS00671">
    <property type="entry name" value="D_2_HYDROXYACID_DH_3"/>
    <property type="match status" value="1"/>
</dbReference>
<comment type="function">
    <text evidence="1 2">Enzyme with hydroxy-pyruvate reductase, glyoxylate reductase and D-glycerate dehydrogenase enzymatic activities. Reduces hydroxypyruvate to D-glycerate, glyoxylate to glycolate, oxidizes D-glycerate to hydroxypyruvate.</text>
</comment>
<comment type="catalytic activity">
    <reaction evidence="1 2">
        <text>glycolate + NADP(+) = glyoxylate + NADPH + H(+)</text>
        <dbReference type="Rhea" id="RHEA:10992"/>
        <dbReference type="ChEBI" id="CHEBI:15378"/>
        <dbReference type="ChEBI" id="CHEBI:29805"/>
        <dbReference type="ChEBI" id="CHEBI:36655"/>
        <dbReference type="ChEBI" id="CHEBI:57783"/>
        <dbReference type="ChEBI" id="CHEBI:58349"/>
        <dbReference type="EC" id="1.1.1.79"/>
    </reaction>
</comment>
<comment type="catalytic activity">
    <reaction evidence="1">
        <text>(R)-glycerate + NAD(+) = 3-hydroxypyruvate + NADH + H(+)</text>
        <dbReference type="Rhea" id="RHEA:17905"/>
        <dbReference type="ChEBI" id="CHEBI:15378"/>
        <dbReference type="ChEBI" id="CHEBI:16659"/>
        <dbReference type="ChEBI" id="CHEBI:17180"/>
        <dbReference type="ChEBI" id="CHEBI:57540"/>
        <dbReference type="ChEBI" id="CHEBI:57945"/>
        <dbReference type="EC" id="1.1.1.81"/>
    </reaction>
</comment>
<comment type="catalytic activity">
    <reaction evidence="1 2">
        <text>(R)-glycerate + NADP(+) = 3-hydroxypyruvate + NADPH + H(+)</text>
        <dbReference type="Rhea" id="RHEA:18657"/>
        <dbReference type="ChEBI" id="CHEBI:15378"/>
        <dbReference type="ChEBI" id="CHEBI:16659"/>
        <dbReference type="ChEBI" id="CHEBI:17180"/>
        <dbReference type="ChEBI" id="CHEBI:57783"/>
        <dbReference type="ChEBI" id="CHEBI:58349"/>
        <dbReference type="EC" id="1.1.1.81"/>
    </reaction>
</comment>
<comment type="subunit">
    <text evidence="2 4">Homodimer.</text>
</comment>
<comment type="interaction">
    <interactant intactId="EBI-372445">
        <id>Q9UBQ7</id>
    </interactant>
    <interactant intactId="EBI-1759386">
        <id>Q9UHI7</id>
        <label>SLC23A1</label>
    </interactant>
    <organismsDiffer>false</organismsDiffer>
    <experiments>6</experiments>
</comment>
<comment type="alternative products">
    <event type="alternative splicing"/>
    <isoform>
        <id>Q9UBQ7-1</id>
        <name>1</name>
        <sequence type="displayed"/>
    </isoform>
    <isoform>
        <id>Q9UBQ7-2</id>
        <name>2</name>
        <sequence type="described" ref="VSP_057016 VSP_057017 VSP_057018"/>
    </isoform>
</comment>
<comment type="tissue specificity">
    <text evidence="3">Ubiquitous. Most abundantly expressed in the liver.</text>
</comment>
<comment type="disease" evidence="1">
    <disease id="DI-01779">
        <name>Hyperoxaluria primary 2</name>
        <acronym>HP2</acronym>
        <description>A disorder characterized by elevated urinary excretion of oxalate and L-glycerate, progressive tissue accumulation of insoluble calcium oxalate, nephrolithiasis, nephrocalcinosis, and end-stage renal disease.</description>
        <dbReference type="MIM" id="260000"/>
    </disease>
    <text>The disease is caused by variants affecting the gene represented in this entry.</text>
</comment>
<comment type="similarity">
    <text evidence="6">Belongs to the D-isomer specific 2-hydroxyacid dehydrogenase family.</text>
</comment>
<comment type="sequence caution" evidence="6">
    <conflict type="frameshift">
        <sequence resource="EMBL-CDS" id="AAD54066"/>
    </conflict>
</comment>
<comment type="sequence caution" evidence="6">
    <conflict type="frameshift">
        <sequence resource="EMBL-CDS" id="AAG39286"/>
    </conflict>
</comment>
<reference key="1">
    <citation type="journal article" date="1999" name="Biochim. Biophys. Acta">
        <title>Identification and expression of a cDNA for human hydroxypyruvate/glyoxylate reductase.</title>
        <authorList>
            <person name="Rumsby G."/>
            <person name="Cregeen D.P."/>
        </authorList>
    </citation>
    <scope>NUCLEOTIDE SEQUENCE [MRNA] (ISOFORM 1)</scope>
    <scope>SUBUNIT</scope>
    <scope>CATALYTIC ACTIVITY</scope>
    <scope>FUNCTION</scope>
    <source>
        <tissue>Liver</tissue>
    </source>
</reference>
<reference key="2">
    <citation type="journal article" date="1999" name="Hum. Mol. Genet.">
        <title>The gene encoding hydroxypyruvate reductase (GRHPR) is mutated in patients with primary hyperoxaluria type II.</title>
        <authorList>
            <person name="Cramer S.D."/>
            <person name="Ferree P.M."/>
            <person name="Lin K."/>
            <person name="Milliner D.S."/>
            <person name="Holmes R.P."/>
        </authorList>
    </citation>
    <scope>NUCLEOTIDE SEQUENCE [GENOMIC DNA / MRNA] (ISOFORM 1)</scope>
    <scope>INVOLVEMENT IN HP2</scope>
    <scope>CATALYTIC ACTIVITY</scope>
    <scope>FUNCTION</scope>
    <source>
        <tissue>Liver</tissue>
    </source>
</reference>
<reference key="3">
    <citation type="submission" date="1998-12" db="EMBL/GenBank/DDBJ databases">
        <authorList>
            <person name="Liu B."/>
            <person name="Liu Y.Q."/>
            <person name="Wang X.Y."/>
            <person name="Zhao B."/>
            <person name="Sheng H."/>
            <person name="Zhao X.W."/>
            <person name="Liu S."/>
            <person name="Xu Y.Y."/>
            <person name="Ye J."/>
            <person name="Song L."/>
            <person name="Gao Y."/>
            <person name="Zhang C.L."/>
            <person name="Zhang J."/>
            <person name="Wei Y.J."/>
            <person name="Cao H.Q."/>
            <person name="Zhao Y."/>
            <person name="Liu L.S."/>
            <person name="Ding J.F."/>
            <person name="Gao R.L."/>
            <person name="Wu Q.Y."/>
            <person name="Qiang B.Q."/>
            <person name="Yuan J.G."/>
            <person name="Liew C.C."/>
            <person name="Zhao M.S."/>
            <person name="Hui R.T."/>
        </authorList>
    </citation>
    <scope>NUCLEOTIDE SEQUENCE [LARGE SCALE MRNA] (ISOFORM 1)</scope>
    <source>
        <tissue>Aorta</tissue>
    </source>
</reference>
<reference key="4">
    <citation type="journal article" date="2004" name="Nat. Genet.">
        <title>Complete sequencing and characterization of 21,243 full-length human cDNAs.</title>
        <authorList>
            <person name="Ota T."/>
            <person name="Suzuki Y."/>
            <person name="Nishikawa T."/>
            <person name="Otsuki T."/>
            <person name="Sugiyama T."/>
            <person name="Irie R."/>
            <person name="Wakamatsu A."/>
            <person name="Hayashi K."/>
            <person name="Sato H."/>
            <person name="Nagai K."/>
            <person name="Kimura K."/>
            <person name="Makita H."/>
            <person name="Sekine M."/>
            <person name="Obayashi M."/>
            <person name="Nishi T."/>
            <person name="Shibahara T."/>
            <person name="Tanaka T."/>
            <person name="Ishii S."/>
            <person name="Yamamoto J."/>
            <person name="Saito K."/>
            <person name="Kawai Y."/>
            <person name="Isono Y."/>
            <person name="Nakamura Y."/>
            <person name="Nagahari K."/>
            <person name="Murakami K."/>
            <person name="Yasuda T."/>
            <person name="Iwayanagi T."/>
            <person name="Wagatsuma M."/>
            <person name="Shiratori A."/>
            <person name="Sudo H."/>
            <person name="Hosoiri T."/>
            <person name="Kaku Y."/>
            <person name="Kodaira H."/>
            <person name="Kondo H."/>
            <person name="Sugawara M."/>
            <person name="Takahashi M."/>
            <person name="Kanda K."/>
            <person name="Yokoi T."/>
            <person name="Furuya T."/>
            <person name="Kikkawa E."/>
            <person name="Omura Y."/>
            <person name="Abe K."/>
            <person name="Kamihara K."/>
            <person name="Katsuta N."/>
            <person name="Sato K."/>
            <person name="Tanikawa M."/>
            <person name="Yamazaki M."/>
            <person name="Ninomiya K."/>
            <person name="Ishibashi T."/>
            <person name="Yamashita H."/>
            <person name="Murakawa K."/>
            <person name="Fujimori K."/>
            <person name="Tanai H."/>
            <person name="Kimata M."/>
            <person name="Watanabe M."/>
            <person name="Hiraoka S."/>
            <person name="Chiba Y."/>
            <person name="Ishida S."/>
            <person name="Ono Y."/>
            <person name="Takiguchi S."/>
            <person name="Watanabe S."/>
            <person name="Yosida M."/>
            <person name="Hotuta T."/>
            <person name="Kusano J."/>
            <person name="Kanehori K."/>
            <person name="Takahashi-Fujii A."/>
            <person name="Hara H."/>
            <person name="Tanase T.-O."/>
            <person name="Nomura Y."/>
            <person name="Togiya S."/>
            <person name="Komai F."/>
            <person name="Hara R."/>
            <person name="Takeuchi K."/>
            <person name="Arita M."/>
            <person name="Imose N."/>
            <person name="Musashino K."/>
            <person name="Yuuki H."/>
            <person name="Oshima A."/>
            <person name="Sasaki N."/>
            <person name="Aotsuka S."/>
            <person name="Yoshikawa Y."/>
            <person name="Matsunawa H."/>
            <person name="Ichihara T."/>
            <person name="Shiohata N."/>
            <person name="Sano S."/>
            <person name="Moriya S."/>
            <person name="Momiyama H."/>
            <person name="Satoh N."/>
            <person name="Takami S."/>
            <person name="Terashima Y."/>
            <person name="Suzuki O."/>
            <person name="Nakagawa S."/>
            <person name="Senoh A."/>
            <person name="Mizoguchi H."/>
            <person name="Goto Y."/>
            <person name="Shimizu F."/>
            <person name="Wakebe H."/>
            <person name="Hishigaki H."/>
            <person name="Watanabe T."/>
            <person name="Sugiyama A."/>
            <person name="Takemoto M."/>
            <person name="Kawakami B."/>
            <person name="Yamazaki M."/>
            <person name="Watanabe K."/>
            <person name="Kumagai A."/>
            <person name="Itakura S."/>
            <person name="Fukuzumi Y."/>
            <person name="Fujimori Y."/>
            <person name="Komiyama M."/>
            <person name="Tashiro H."/>
            <person name="Tanigami A."/>
            <person name="Fujiwara T."/>
            <person name="Ono T."/>
            <person name="Yamada K."/>
            <person name="Fujii Y."/>
            <person name="Ozaki K."/>
            <person name="Hirao M."/>
            <person name="Ohmori Y."/>
            <person name="Kawabata A."/>
            <person name="Hikiji T."/>
            <person name="Kobatake N."/>
            <person name="Inagaki H."/>
            <person name="Ikema Y."/>
            <person name="Okamoto S."/>
            <person name="Okitani R."/>
            <person name="Kawakami T."/>
            <person name="Noguchi S."/>
            <person name="Itoh T."/>
            <person name="Shigeta K."/>
            <person name="Senba T."/>
            <person name="Matsumura K."/>
            <person name="Nakajima Y."/>
            <person name="Mizuno T."/>
            <person name="Morinaga M."/>
            <person name="Sasaki M."/>
            <person name="Togashi T."/>
            <person name="Oyama M."/>
            <person name="Hata H."/>
            <person name="Watanabe M."/>
            <person name="Komatsu T."/>
            <person name="Mizushima-Sugano J."/>
            <person name="Satoh T."/>
            <person name="Shirai Y."/>
            <person name="Takahashi Y."/>
            <person name="Nakagawa K."/>
            <person name="Okumura K."/>
            <person name="Nagase T."/>
            <person name="Nomura N."/>
            <person name="Kikuchi H."/>
            <person name="Masuho Y."/>
            <person name="Yamashita R."/>
            <person name="Nakai K."/>
            <person name="Yada T."/>
            <person name="Nakamura Y."/>
            <person name="Ohara O."/>
            <person name="Isogai T."/>
            <person name="Sugano S."/>
        </authorList>
    </citation>
    <scope>NUCLEOTIDE SEQUENCE [LARGE SCALE MRNA] (ISOFORMS 1 AND 2)</scope>
    <source>
        <tissue>Small intestine</tissue>
        <tissue>Testis</tissue>
    </source>
</reference>
<reference key="5">
    <citation type="journal article" date="2004" name="Nature">
        <title>DNA sequence and analysis of human chromosome 9.</title>
        <authorList>
            <person name="Humphray S.J."/>
            <person name="Oliver K."/>
            <person name="Hunt A.R."/>
            <person name="Plumb R.W."/>
            <person name="Loveland J.E."/>
            <person name="Howe K.L."/>
            <person name="Andrews T.D."/>
            <person name="Searle S."/>
            <person name="Hunt S.E."/>
            <person name="Scott C.E."/>
            <person name="Jones M.C."/>
            <person name="Ainscough R."/>
            <person name="Almeida J.P."/>
            <person name="Ambrose K.D."/>
            <person name="Ashwell R.I.S."/>
            <person name="Babbage A.K."/>
            <person name="Babbage S."/>
            <person name="Bagguley C.L."/>
            <person name="Bailey J."/>
            <person name="Banerjee R."/>
            <person name="Barker D.J."/>
            <person name="Barlow K.F."/>
            <person name="Bates K."/>
            <person name="Beasley H."/>
            <person name="Beasley O."/>
            <person name="Bird C.P."/>
            <person name="Bray-Allen S."/>
            <person name="Brown A.J."/>
            <person name="Brown J.Y."/>
            <person name="Burford D."/>
            <person name="Burrill W."/>
            <person name="Burton J."/>
            <person name="Carder C."/>
            <person name="Carter N.P."/>
            <person name="Chapman J.C."/>
            <person name="Chen Y."/>
            <person name="Clarke G."/>
            <person name="Clark S.Y."/>
            <person name="Clee C.M."/>
            <person name="Clegg S."/>
            <person name="Collier R.E."/>
            <person name="Corby N."/>
            <person name="Crosier M."/>
            <person name="Cummings A.T."/>
            <person name="Davies J."/>
            <person name="Dhami P."/>
            <person name="Dunn M."/>
            <person name="Dutta I."/>
            <person name="Dyer L.W."/>
            <person name="Earthrowl M.E."/>
            <person name="Faulkner L."/>
            <person name="Fleming C.J."/>
            <person name="Frankish A."/>
            <person name="Frankland J.A."/>
            <person name="French L."/>
            <person name="Fricker D.G."/>
            <person name="Garner P."/>
            <person name="Garnett J."/>
            <person name="Ghori J."/>
            <person name="Gilbert J.G.R."/>
            <person name="Glison C."/>
            <person name="Grafham D.V."/>
            <person name="Gribble S."/>
            <person name="Griffiths C."/>
            <person name="Griffiths-Jones S."/>
            <person name="Grocock R."/>
            <person name="Guy J."/>
            <person name="Hall R.E."/>
            <person name="Hammond S."/>
            <person name="Harley J.L."/>
            <person name="Harrison E.S.I."/>
            <person name="Hart E.A."/>
            <person name="Heath P.D."/>
            <person name="Henderson C.D."/>
            <person name="Hopkins B.L."/>
            <person name="Howard P.J."/>
            <person name="Howden P.J."/>
            <person name="Huckle E."/>
            <person name="Johnson C."/>
            <person name="Johnson D."/>
            <person name="Joy A.A."/>
            <person name="Kay M."/>
            <person name="Keenan S."/>
            <person name="Kershaw J.K."/>
            <person name="Kimberley A.M."/>
            <person name="King A."/>
            <person name="Knights A."/>
            <person name="Laird G.K."/>
            <person name="Langford C."/>
            <person name="Lawlor S."/>
            <person name="Leongamornlert D.A."/>
            <person name="Leversha M."/>
            <person name="Lloyd C."/>
            <person name="Lloyd D.M."/>
            <person name="Lovell J."/>
            <person name="Martin S."/>
            <person name="Mashreghi-Mohammadi M."/>
            <person name="Matthews L."/>
            <person name="McLaren S."/>
            <person name="McLay K.E."/>
            <person name="McMurray A."/>
            <person name="Milne S."/>
            <person name="Nickerson T."/>
            <person name="Nisbett J."/>
            <person name="Nordsiek G."/>
            <person name="Pearce A.V."/>
            <person name="Peck A.I."/>
            <person name="Porter K.M."/>
            <person name="Pandian R."/>
            <person name="Pelan S."/>
            <person name="Phillimore B."/>
            <person name="Povey S."/>
            <person name="Ramsey Y."/>
            <person name="Rand V."/>
            <person name="Scharfe M."/>
            <person name="Sehra H.K."/>
            <person name="Shownkeen R."/>
            <person name="Sims S.K."/>
            <person name="Skuce C.D."/>
            <person name="Smith M."/>
            <person name="Steward C.A."/>
            <person name="Swarbreck D."/>
            <person name="Sycamore N."/>
            <person name="Tester J."/>
            <person name="Thorpe A."/>
            <person name="Tracey A."/>
            <person name="Tromans A."/>
            <person name="Thomas D.W."/>
            <person name="Wall M."/>
            <person name="Wallis J.M."/>
            <person name="West A.P."/>
            <person name="Whitehead S.L."/>
            <person name="Willey D.L."/>
            <person name="Williams S.A."/>
            <person name="Wilming L."/>
            <person name="Wray P.W."/>
            <person name="Young L."/>
            <person name="Ashurst J.L."/>
            <person name="Coulson A."/>
            <person name="Blocker H."/>
            <person name="Durbin R.M."/>
            <person name="Sulston J.E."/>
            <person name="Hubbard T."/>
            <person name="Jackson M.J."/>
            <person name="Bentley D.R."/>
            <person name="Beck S."/>
            <person name="Rogers J."/>
            <person name="Dunham I."/>
        </authorList>
    </citation>
    <scope>NUCLEOTIDE SEQUENCE [LARGE SCALE GENOMIC DNA]</scope>
</reference>
<reference key="6">
    <citation type="submission" date="2005-09" db="EMBL/GenBank/DDBJ databases">
        <authorList>
            <person name="Mural R.J."/>
            <person name="Istrail S."/>
            <person name="Sutton G."/>
            <person name="Florea L."/>
            <person name="Halpern A.L."/>
            <person name="Mobarry C.M."/>
            <person name="Lippert R."/>
            <person name="Walenz B."/>
            <person name="Shatkay H."/>
            <person name="Dew I."/>
            <person name="Miller J.R."/>
            <person name="Flanigan M.J."/>
            <person name="Edwards N.J."/>
            <person name="Bolanos R."/>
            <person name="Fasulo D."/>
            <person name="Halldorsson B.V."/>
            <person name="Hannenhalli S."/>
            <person name="Turner R."/>
            <person name="Yooseph S."/>
            <person name="Lu F."/>
            <person name="Nusskern D.R."/>
            <person name="Shue B.C."/>
            <person name="Zheng X.H."/>
            <person name="Zhong F."/>
            <person name="Delcher A.L."/>
            <person name="Huson D.H."/>
            <person name="Kravitz S.A."/>
            <person name="Mouchard L."/>
            <person name="Reinert K."/>
            <person name="Remington K.A."/>
            <person name="Clark A.G."/>
            <person name="Waterman M.S."/>
            <person name="Eichler E.E."/>
            <person name="Adams M.D."/>
            <person name="Hunkapiller M.W."/>
            <person name="Myers E.W."/>
            <person name="Venter J.C."/>
        </authorList>
    </citation>
    <scope>NUCLEOTIDE SEQUENCE [LARGE SCALE GENOMIC DNA]</scope>
</reference>
<reference key="7">
    <citation type="journal article" date="2004" name="Genome Res.">
        <title>The status, quality, and expansion of the NIH full-length cDNA project: the Mammalian Gene Collection (MGC).</title>
        <authorList>
            <consortium name="The MGC Project Team"/>
        </authorList>
    </citation>
    <scope>NUCLEOTIDE SEQUENCE [LARGE SCALE MRNA] (ISOFORM 1)</scope>
    <source>
        <tissue>Kidney</tissue>
    </source>
</reference>
<reference key="8">
    <citation type="journal article" date="2000" name="Biochem. Biophys. Res. Commun.">
        <title>Cloning and characterization of a putative human D-2-hydroxyacid dehydrogenase in chromosome 9q.</title>
        <authorList>
            <person name="Huang T."/>
            <person name="Yang W."/>
            <person name="Pereira A.C."/>
            <person name="Craigen W.J."/>
            <person name="Shih V.E."/>
        </authorList>
    </citation>
    <scope>NUCLEOTIDE SEQUENCE [MRNA] OF 45-328 (ISOFORM 1)</scope>
    <scope>TISSUE SPECIFICITY</scope>
</reference>
<reference key="9">
    <citation type="journal article" date="2011" name="BMC Syst. Biol.">
        <title>Initial characterization of the human central proteome.</title>
        <authorList>
            <person name="Burkard T.R."/>
            <person name="Planyavsky M."/>
            <person name="Kaupe I."/>
            <person name="Breitwieser F.P."/>
            <person name="Buerckstuemmer T."/>
            <person name="Bennett K.L."/>
            <person name="Superti-Furga G."/>
            <person name="Colinge J."/>
        </authorList>
    </citation>
    <scope>IDENTIFICATION BY MASS SPECTROMETRY [LARGE SCALE ANALYSIS]</scope>
</reference>
<reference key="10">
    <citation type="journal article" date="2014" name="J. Proteomics">
        <title>An enzyme assisted RP-RPLC approach for in-depth analysis of human liver phosphoproteome.</title>
        <authorList>
            <person name="Bian Y."/>
            <person name="Song C."/>
            <person name="Cheng K."/>
            <person name="Dong M."/>
            <person name="Wang F."/>
            <person name="Huang J."/>
            <person name="Sun D."/>
            <person name="Wang L."/>
            <person name="Ye M."/>
            <person name="Zou H."/>
        </authorList>
    </citation>
    <scope>PHOSPHORYLATION [LARGE SCALE ANALYSIS] AT SER-36; SER-272 AND THR-298</scope>
    <scope>IDENTIFICATION BY MASS SPECTROMETRY [LARGE SCALE ANALYSIS]</scope>
    <source>
        <tissue>Liver</tissue>
    </source>
</reference>
<reference key="11">
    <citation type="journal article" date="2015" name="Proteomics">
        <title>N-terminome analysis of the human mitochondrial proteome.</title>
        <authorList>
            <person name="Vaca Jacome A.S."/>
            <person name="Rabilloud T."/>
            <person name="Schaeffer-Reiss C."/>
            <person name="Rompais M."/>
            <person name="Ayoub D."/>
            <person name="Lane L."/>
            <person name="Bairoch A."/>
            <person name="Van Dorsselaer A."/>
            <person name="Carapito C."/>
        </authorList>
    </citation>
    <scope>IDENTIFICATION BY MASS SPECTROMETRY [LARGE SCALE ANALYSIS]</scope>
</reference>
<reference key="12">
    <citation type="journal article" date="2006" name="J. Mol. Biol.">
        <title>Structural basis of substrate specificity in human glyoxylate reductase/hydroxypyruvate reductase.</title>
        <authorList>
            <person name="Booth M.P.S."/>
            <person name="Conners R."/>
            <person name="Rumsby G."/>
            <person name="Brady R.L."/>
        </authorList>
    </citation>
    <scope>X-RAY CRYSTALLOGRAPHY (2.2 ANGSTROMS) IN COMPLEX WITH NADP AND SUBSTRATE</scope>
    <scope>SUBUNIT</scope>
</reference>
<reference key="13">
    <citation type="submission" date="2009-02" db="PDB data bank">
        <title>Crystal structure of a glyoxylate/hydroxypyruvate reductase from Homo sapiens.</title>
        <authorList>
            <consortium name="Center for eukaryotic structural genomics (CESG)"/>
        </authorList>
    </citation>
    <scope>X-RAY CRYSTALLOGRAPHY (2.45 ANGSTROMS) OF 2-328</scope>
</reference>
<evidence type="ECO:0000269" key="1">
    <source>
    </source>
</evidence>
<evidence type="ECO:0000269" key="2">
    <source>
    </source>
</evidence>
<evidence type="ECO:0000269" key="3">
    <source>
    </source>
</evidence>
<evidence type="ECO:0000269" key="4">
    <source>
    </source>
</evidence>
<evidence type="ECO:0000303" key="5">
    <source>
    </source>
</evidence>
<evidence type="ECO:0000305" key="6"/>
<evidence type="ECO:0000305" key="7">
    <source>
    </source>
</evidence>
<evidence type="ECO:0007744" key="8">
    <source>
    </source>
</evidence>
<evidence type="ECO:0007829" key="9">
    <source>
        <dbReference type="PDB" id="2GCG"/>
    </source>
</evidence>
<evidence type="ECO:0007829" key="10">
    <source>
        <dbReference type="PDB" id="2Q50"/>
    </source>
</evidence>
<sequence>MRPVRLMKVFVTRRIPAEGRVALARAADCEVEQWDSDEPIPAKELERGVAGAHGLLCLLSDHVDKRILDAAGANLKVISTMSVGIDHLALDEIKKRGIRVGYTPDVLTDTTAELAVSLLLTTCRRLPEAIEEVKNGGWTSWKPLWLCGYGLTQSTVGIIGLGRIGQAIARRLKPFGVQRFLYTGRQPRPEEAAEFQAEFVSTPELAAQSDFIVVACSLTPATEGLCNKDFFQKMKETAVFINISRGDVVNQDDLYQALASGKIAAAGLDVTSPEPLPTNHPLLTLKNCVILPHIGSATHRTRNTMSLLAANNLLAGLRGEPMPSELKL</sequence>
<name>GRHPR_HUMAN</name>
<gene>
    <name type="primary">GRHPR</name>
    <name type="synonym">GLXR</name>
    <name type="ORF">MSTP035</name>
</gene>
<proteinExistence type="evidence at protein level"/>
<protein>
    <recommendedName>
        <fullName>Glyoxylate reductase/hydroxypyruvate reductase</fullName>
        <ecNumber evidence="1 2">1.1.1.79</ecNumber>
        <ecNumber evidence="1 2">1.1.1.81</ecNumber>
    </recommendedName>
</protein>
<accession>Q9UBQ7</accession>
<accession>Q5T945</accession>
<accession>Q9H3E9</accession>
<accession>Q9H636</accession>
<accession>Q9UKX1</accession>
<organism>
    <name type="scientific">Homo sapiens</name>
    <name type="common">Human</name>
    <dbReference type="NCBI Taxonomy" id="9606"/>
    <lineage>
        <taxon>Eukaryota</taxon>
        <taxon>Metazoa</taxon>
        <taxon>Chordata</taxon>
        <taxon>Craniata</taxon>
        <taxon>Vertebrata</taxon>
        <taxon>Euteleostomi</taxon>
        <taxon>Mammalia</taxon>
        <taxon>Eutheria</taxon>
        <taxon>Euarchontoglires</taxon>
        <taxon>Primates</taxon>
        <taxon>Haplorrhini</taxon>
        <taxon>Catarrhini</taxon>
        <taxon>Hominidae</taxon>
        <taxon>Homo</taxon>
    </lineage>
</organism>
<keyword id="KW-0002">3D-structure</keyword>
<keyword id="KW-0025">Alternative splicing</keyword>
<keyword id="KW-0521">NADP</keyword>
<keyword id="KW-0560">Oxidoreductase</keyword>
<keyword id="KW-0597">Phosphoprotein</keyword>
<keyword id="KW-1267">Proteomics identification</keyword>
<keyword id="KW-1185">Reference proteome</keyword>
<feature type="chain" id="PRO_0000075944" description="Glyoxylate reductase/hydroxypyruvate reductase">
    <location>
        <begin position="1"/>
        <end position="328"/>
    </location>
</feature>
<feature type="active site" description="Proton donor" evidence="7">
    <location>
        <position position="293"/>
    </location>
</feature>
<feature type="binding site" evidence="4">
    <location>
        <begin position="83"/>
        <end position="84"/>
    </location>
    <ligand>
        <name>substrate</name>
    </ligand>
</feature>
<feature type="binding site" evidence="4">
    <location>
        <begin position="162"/>
        <end position="164"/>
    </location>
    <ligand>
        <name>NADP(+)</name>
        <dbReference type="ChEBI" id="CHEBI:58349"/>
    </ligand>
</feature>
<feature type="binding site" evidence="4">
    <location>
        <begin position="185"/>
        <end position="188"/>
    </location>
    <ligand>
        <name>NADP(+)</name>
        <dbReference type="ChEBI" id="CHEBI:58349"/>
    </ligand>
</feature>
<feature type="binding site" evidence="4">
    <location>
        <position position="217"/>
    </location>
    <ligand>
        <name>NADP(+)</name>
        <dbReference type="ChEBI" id="CHEBI:58349"/>
    </ligand>
</feature>
<feature type="binding site" evidence="4">
    <location>
        <position position="243"/>
    </location>
    <ligand>
        <name>NADP(+)</name>
        <dbReference type="ChEBI" id="CHEBI:58349"/>
    </ligand>
</feature>
<feature type="binding site" evidence="4">
    <location>
        <position position="245"/>
    </location>
    <ligand>
        <name>substrate</name>
    </ligand>
</feature>
<feature type="binding site" evidence="4">
    <location>
        <position position="269"/>
    </location>
    <ligand>
        <name>substrate</name>
    </ligand>
</feature>
<feature type="binding site" evidence="4">
    <location>
        <begin position="293"/>
        <end position="296"/>
    </location>
    <ligand>
        <name>substrate</name>
    </ligand>
</feature>
<feature type="binding site" evidence="4">
    <location>
        <position position="295"/>
    </location>
    <ligand>
        <name>NADP(+)</name>
        <dbReference type="ChEBI" id="CHEBI:58349"/>
    </ligand>
</feature>
<feature type="site" description="Raises pKa of active site His" evidence="7">
    <location>
        <position position="274"/>
    </location>
</feature>
<feature type="modified residue" description="Phosphoserine" evidence="8">
    <location>
        <position position="36"/>
    </location>
</feature>
<feature type="modified residue" description="Phosphoserine" evidence="8">
    <location>
        <position position="272"/>
    </location>
</feature>
<feature type="modified residue" description="Phosphothreonine" evidence="8">
    <location>
        <position position="298"/>
    </location>
</feature>
<feature type="splice variant" id="VSP_057016" description="In isoform 2." evidence="5">
    <original>MRPVRLMKVFVTRRIPAEGRV</original>
    <variation>MLGGVPTLCGTGNETWTLLAL</variation>
    <location>
        <begin position="1"/>
        <end position="21"/>
    </location>
</feature>
<feature type="splice variant" id="VSP_057017" description="In isoform 2." evidence="5">
    <location>
        <begin position="22"/>
        <end position="164"/>
    </location>
</feature>
<feature type="splice variant" id="VSP_057018" description="In isoform 2." evidence="5">
    <original>GDVVNQDDLYQALASGKIAAAGLDVTSPEPLPTNHPLLTLKNCVILPHIGSATHRTRNTMSLLAANNLLAGLRGEPMPSELKL</original>
    <variation>YPRATLPSKPGEEPSPLLPSGDFLPRGLLVRPQAELAGFHKPNNQLRNSWEYTRPPYREEEPSEWAWPVCFSAVAPTRRGLAHSSVASGSVPREPLQAHYPPPQRAGLEDLKGPLEAASHTAEPGFVWLWFSDTLNLMLLGGQTLKLTWS</variation>
    <location>
        <begin position="246"/>
        <end position="328"/>
    </location>
</feature>
<feature type="sequence variant" id="VAR_032762" description="In dbSNP:rs12002324.">
    <original>R</original>
    <variation>Q</variation>
    <location>
        <position position="170"/>
    </location>
</feature>
<feature type="strand" evidence="9">
    <location>
        <begin position="7"/>
        <end position="13"/>
    </location>
</feature>
<feature type="helix" evidence="9">
    <location>
        <begin position="17"/>
        <end position="25"/>
    </location>
</feature>
<feature type="strand" evidence="9">
    <location>
        <begin position="29"/>
        <end position="33"/>
    </location>
</feature>
<feature type="strand" evidence="9">
    <location>
        <begin position="36"/>
        <end position="38"/>
    </location>
</feature>
<feature type="helix" evidence="9">
    <location>
        <begin position="42"/>
        <end position="49"/>
    </location>
</feature>
<feature type="strand" evidence="9">
    <location>
        <begin position="53"/>
        <end position="57"/>
    </location>
</feature>
<feature type="helix" evidence="9">
    <location>
        <begin position="65"/>
        <end position="71"/>
    </location>
</feature>
<feature type="strand" evidence="9">
    <location>
        <begin position="77"/>
        <end position="83"/>
    </location>
</feature>
<feature type="helix" evidence="9">
    <location>
        <begin position="90"/>
        <end position="95"/>
    </location>
</feature>
<feature type="strand" evidence="9">
    <location>
        <begin position="99"/>
        <end position="101"/>
    </location>
</feature>
<feature type="helix" evidence="9">
    <location>
        <begin position="108"/>
        <end position="123"/>
    </location>
</feature>
<feature type="helix" evidence="9">
    <location>
        <begin position="126"/>
        <end position="134"/>
    </location>
</feature>
<feature type="strand" evidence="10">
    <location>
        <begin position="143"/>
        <end position="146"/>
    </location>
</feature>
<feature type="strand" evidence="9">
    <location>
        <begin position="155"/>
        <end position="159"/>
    </location>
</feature>
<feature type="helix" evidence="9">
    <location>
        <begin position="163"/>
        <end position="172"/>
    </location>
</feature>
<feature type="helix" evidence="9">
    <location>
        <begin position="173"/>
        <end position="175"/>
    </location>
</feature>
<feature type="strand" evidence="9">
    <location>
        <begin position="179"/>
        <end position="186"/>
    </location>
</feature>
<feature type="helix" evidence="9">
    <location>
        <begin position="189"/>
        <end position="193"/>
    </location>
</feature>
<feature type="turn" evidence="9">
    <location>
        <begin position="194"/>
        <end position="196"/>
    </location>
</feature>
<feature type="strand" evidence="10">
    <location>
        <begin position="197"/>
        <end position="199"/>
    </location>
</feature>
<feature type="helix" evidence="9">
    <location>
        <begin position="202"/>
        <end position="208"/>
    </location>
</feature>
<feature type="strand" evidence="9">
    <location>
        <begin position="210"/>
        <end position="214"/>
    </location>
</feature>
<feature type="turn" evidence="9">
    <location>
        <begin position="220"/>
        <end position="224"/>
    </location>
</feature>
<feature type="helix" evidence="9">
    <location>
        <begin position="228"/>
        <end position="233"/>
    </location>
</feature>
<feature type="strand" evidence="9">
    <location>
        <begin position="239"/>
        <end position="242"/>
    </location>
</feature>
<feature type="helix" evidence="9">
    <location>
        <begin position="246"/>
        <end position="248"/>
    </location>
</feature>
<feature type="helix" evidence="9">
    <location>
        <begin position="251"/>
        <end position="259"/>
    </location>
</feature>
<feature type="strand" evidence="9">
    <location>
        <begin position="262"/>
        <end position="269"/>
    </location>
</feature>
<feature type="strand" evidence="9">
    <location>
        <begin position="272"/>
        <end position="275"/>
    </location>
</feature>
<feature type="helix" evidence="9">
    <location>
        <begin position="281"/>
        <end position="284"/>
    </location>
</feature>
<feature type="strand" evidence="9">
    <location>
        <begin position="288"/>
        <end position="290"/>
    </location>
</feature>
<feature type="helix" evidence="9">
    <location>
        <begin position="299"/>
        <end position="318"/>
    </location>
</feature>